<name>PANC_HELPY</name>
<evidence type="ECO:0000255" key="1">
    <source>
        <dbReference type="HAMAP-Rule" id="MF_00158"/>
    </source>
</evidence>
<keyword id="KW-0067">ATP-binding</keyword>
<keyword id="KW-0963">Cytoplasm</keyword>
<keyword id="KW-0436">Ligase</keyword>
<keyword id="KW-0547">Nucleotide-binding</keyword>
<keyword id="KW-0566">Pantothenate biosynthesis</keyword>
<keyword id="KW-1185">Reference proteome</keyword>
<protein>
    <recommendedName>
        <fullName evidence="1">Pantothenate synthetase</fullName>
        <shortName evidence="1">PS</shortName>
        <ecNumber evidence="1">6.3.2.1</ecNumber>
    </recommendedName>
    <alternativeName>
        <fullName evidence="1">Pantoate--beta-alanine ligase</fullName>
    </alternativeName>
    <alternativeName>
        <fullName evidence="1">Pantoate-activating enzyme</fullName>
    </alternativeName>
</protein>
<organism>
    <name type="scientific">Helicobacter pylori (strain ATCC 700392 / 26695)</name>
    <name type="common">Campylobacter pylori</name>
    <dbReference type="NCBI Taxonomy" id="85962"/>
    <lineage>
        <taxon>Bacteria</taxon>
        <taxon>Pseudomonadati</taxon>
        <taxon>Campylobacterota</taxon>
        <taxon>Epsilonproteobacteria</taxon>
        <taxon>Campylobacterales</taxon>
        <taxon>Helicobacteraceae</taxon>
        <taxon>Helicobacter</taxon>
    </lineage>
</organism>
<feature type="chain" id="PRO_0000128235" description="Pantothenate synthetase">
    <location>
        <begin position="1"/>
        <end position="276"/>
    </location>
</feature>
<feature type="active site" description="Proton donor" evidence="1">
    <location>
        <position position="34"/>
    </location>
</feature>
<feature type="binding site" evidence="1">
    <location>
        <begin position="27"/>
        <end position="34"/>
    </location>
    <ligand>
        <name>ATP</name>
        <dbReference type="ChEBI" id="CHEBI:30616"/>
    </ligand>
</feature>
<feature type="binding site" evidence="1">
    <location>
        <position position="58"/>
    </location>
    <ligand>
        <name>(R)-pantoate</name>
        <dbReference type="ChEBI" id="CHEBI:15980"/>
    </ligand>
</feature>
<feature type="binding site" evidence="1">
    <location>
        <position position="58"/>
    </location>
    <ligand>
        <name>beta-alanine</name>
        <dbReference type="ChEBI" id="CHEBI:57966"/>
    </ligand>
</feature>
<feature type="binding site" evidence="1">
    <location>
        <begin position="147"/>
        <end position="150"/>
    </location>
    <ligand>
        <name>ATP</name>
        <dbReference type="ChEBI" id="CHEBI:30616"/>
    </ligand>
</feature>
<feature type="binding site" evidence="1">
    <location>
        <position position="153"/>
    </location>
    <ligand>
        <name>(R)-pantoate</name>
        <dbReference type="ChEBI" id="CHEBI:15980"/>
    </ligand>
</feature>
<feature type="binding site" evidence="1">
    <location>
        <position position="176"/>
    </location>
    <ligand>
        <name>ATP</name>
        <dbReference type="ChEBI" id="CHEBI:30616"/>
    </ligand>
</feature>
<feature type="binding site" evidence="1">
    <location>
        <begin position="184"/>
        <end position="187"/>
    </location>
    <ligand>
        <name>ATP</name>
        <dbReference type="ChEBI" id="CHEBI:30616"/>
    </ligand>
</feature>
<comment type="function">
    <text evidence="1">Catalyzes the condensation of pantoate with beta-alanine in an ATP-dependent reaction via a pantoyl-adenylate intermediate.</text>
</comment>
<comment type="catalytic activity">
    <reaction evidence="1">
        <text>(R)-pantoate + beta-alanine + ATP = (R)-pantothenate + AMP + diphosphate + H(+)</text>
        <dbReference type="Rhea" id="RHEA:10912"/>
        <dbReference type="ChEBI" id="CHEBI:15378"/>
        <dbReference type="ChEBI" id="CHEBI:15980"/>
        <dbReference type="ChEBI" id="CHEBI:29032"/>
        <dbReference type="ChEBI" id="CHEBI:30616"/>
        <dbReference type="ChEBI" id="CHEBI:33019"/>
        <dbReference type="ChEBI" id="CHEBI:57966"/>
        <dbReference type="ChEBI" id="CHEBI:456215"/>
        <dbReference type="EC" id="6.3.2.1"/>
    </reaction>
</comment>
<comment type="pathway">
    <text evidence="1">Cofactor biosynthesis; (R)-pantothenate biosynthesis; (R)-pantothenate from (R)-pantoate and beta-alanine: step 1/1.</text>
</comment>
<comment type="subunit">
    <text evidence="1">Homodimer.</text>
</comment>
<comment type="subcellular location">
    <subcellularLocation>
        <location evidence="1">Cytoplasm</location>
    </subcellularLocation>
</comment>
<comment type="miscellaneous">
    <text evidence="1">The reaction proceeds by a bi uni uni bi ping pong mechanism.</text>
</comment>
<comment type="similarity">
    <text evidence="1">Belongs to the pantothenate synthetase family.</text>
</comment>
<reference key="1">
    <citation type="journal article" date="1997" name="Nature">
        <title>The complete genome sequence of the gastric pathogen Helicobacter pylori.</title>
        <authorList>
            <person name="Tomb J.-F."/>
            <person name="White O."/>
            <person name="Kerlavage A.R."/>
            <person name="Clayton R.A."/>
            <person name="Sutton G.G."/>
            <person name="Fleischmann R.D."/>
            <person name="Ketchum K.A."/>
            <person name="Klenk H.-P."/>
            <person name="Gill S.R."/>
            <person name="Dougherty B.A."/>
            <person name="Nelson K.E."/>
            <person name="Quackenbush J."/>
            <person name="Zhou L."/>
            <person name="Kirkness E.F."/>
            <person name="Peterson S.N."/>
            <person name="Loftus B.J."/>
            <person name="Richardson D.L."/>
            <person name="Dodson R.J."/>
            <person name="Khalak H.G."/>
            <person name="Glodek A."/>
            <person name="McKenney K."/>
            <person name="FitzGerald L.M."/>
            <person name="Lee N."/>
            <person name="Adams M.D."/>
            <person name="Hickey E.K."/>
            <person name="Berg D.E."/>
            <person name="Gocayne J.D."/>
            <person name="Utterback T.R."/>
            <person name="Peterson J.D."/>
            <person name="Kelley J.M."/>
            <person name="Cotton M.D."/>
            <person name="Weidman J.F."/>
            <person name="Fujii C."/>
            <person name="Bowman C."/>
            <person name="Watthey L."/>
            <person name="Wallin E."/>
            <person name="Hayes W.S."/>
            <person name="Borodovsky M."/>
            <person name="Karp P.D."/>
            <person name="Smith H.O."/>
            <person name="Fraser C.M."/>
            <person name="Venter J.C."/>
        </authorList>
    </citation>
    <scope>NUCLEOTIDE SEQUENCE [LARGE SCALE GENOMIC DNA]</scope>
    <source>
        <strain>ATCC 700392 / 26695</strain>
    </source>
</reference>
<dbReference type="EC" id="6.3.2.1" evidence="1"/>
<dbReference type="EMBL" id="AE000511">
    <property type="protein sequence ID" value="AAD07079.1"/>
    <property type="molecule type" value="Genomic_DNA"/>
</dbReference>
<dbReference type="PIR" id="F64520">
    <property type="entry name" value="F64520"/>
</dbReference>
<dbReference type="RefSeq" id="NP_206808.1">
    <property type="nucleotide sequence ID" value="NC_000915.1"/>
</dbReference>
<dbReference type="RefSeq" id="WP_001264323.1">
    <property type="nucleotide sequence ID" value="NC_018939.1"/>
</dbReference>
<dbReference type="SMR" id="P56061"/>
<dbReference type="DIP" id="DIP-3102N"/>
<dbReference type="FunCoup" id="P56061">
    <property type="interactions" value="361"/>
</dbReference>
<dbReference type="IntAct" id="P56061">
    <property type="interactions" value="3"/>
</dbReference>
<dbReference type="MINT" id="P56061"/>
<dbReference type="STRING" id="85962.HP_0006"/>
<dbReference type="PaxDb" id="85962-C694_00030"/>
<dbReference type="EnsemblBacteria" id="AAD07079">
    <property type="protein sequence ID" value="AAD07079"/>
    <property type="gene ID" value="HP_0006"/>
</dbReference>
<dbReference type="KEGG" id="heo:C694_00030"/>
<dbReference type="KEGG" id="hpy:HP_0006"/>
<dbReference type="PATRIC" id="fig|85962.47.peg.6"/>
<dbReference type="eggNOG" id="COG0414">
    <property type="taxonomic scope" value="Bacteria"/>
</dbReference>
<dbReference type="InParanoid" id="P56061"/>
<dbReference type="OrthoDB" id="9773087at2"/>
<dbReference type="PhylomeDB" id="P56061"/>
<dbReference type="UniPathway" id="UPA00028">
    <property type="reaction ID" value="UER00005"/>
</dbReference>
<dbReference type="Proteomes" id="UP000000429">
    <property type="component" value="Chromosome"/>
</dbReference>
<dbReference type="GO" id="GO:0005829">
    <property type="term" value="C:cytosol"/>
    <property type="evidence" value="ECO:0000318"/>
    <property type="project" value="GO_Central"/>
</dbReference>
<dbReference type="GO" id="GO:0005524">
    <property type="term" value="F:ATP binding"/>
    <property type="evidence" value="ECO:0007669"/>
    <property type="project" value="UniProtKB-KW"/>
</dbReference>
<dbReference type="GO" id="GO:0004592">
    <property type="term" value="F:pantoate-beta-alanine ligase activity"/>
    <property type="evidence" value="ECO:0000318"/>
    <property type="project" value="GO_Central"/>
</dbReference>
<dbReference type="GO" id="GO:0015940">
    <property type="term" value="P:pantothenate biosynthetic process"/>
    <property type="evidence" value="ECO:0000318"/>
    <property type="project" value="GO_Central"/>
</dbReference>
<dbReference type="CDD" id="cd00560">
    <property type="entry name" value="PanC"/>
    <property type="match status" value="1"/>
</dbReference>
<dbReference type="FunFam" id="3.40.50.620:FF:000114">
    <property type="entry name" value="Pantothenate synthetase"/>
    <property type="match status" value="1"/>
</dbReference>
<dbReference type="Gene3D" id="3.40.50.620">
    <property type="entry name" value="HUPs"/>
    <property type="match status" value="1"/>
</dbReference>
<dbReference type="Gene3D" id="3.30.1300.10">
    <property type="entry name" value="Pantoate-beta-alanine ligase, C-terminal domain"/>
    <property type="match status" value="1"/>
</dbReference>
<dbReference type="HAMAP" id="MF_00158">
    <property type="entry name" value="PanC"/>
    <property type="match status" value="1"/>
</dbReference>
<dbReference type="InterPro" id="IPR004821">
    <property type="entry name" value="Cyt_trans-like"/>
</dbReference>
<dbReference type="InterPro" id="IPR003721">
    <property type="entry name" value="Pantoate_ligase"/>
</dbReference>
<dbReference type="InterPro" id="IPR042176">
    <property type="entry name" value="Pantoate_ligase_C"/>
</dbReference>
<dbReference type="InterPro" id="IPR014729">
    <property type="entry name" value="Rossmann-like_a/b/a_fold"/>
</dbReference>
<dbReference type="NCBIfam" id="TIGR00125">
    <property type="entry name" value="cyt_tran_rel"/>
    <property type="match status" value="1"/>
</dbReference>
<dbReference type="NCBIfam" id="TIGR00018">
    <property type="entry name" value="panC"/>
    <property type="match status" value="1"/>
</dbReference>
<dbReference type="PANTHER" id="PTHR21299">
    <property type="entry name" value="CYTIDYLATE KINASE/PANTOATE-BETA-ALANINE LIGASE"/>
    <property type="match status" value="1"/>
</dbReference>
<dbReference type="PANTHER" id="PTHR21299:SF1">
    <property type="entry name" value="PANTOATE--BETA-ALANINE LIGASE"/>
    <property type="match status" value="1"/>
</dbReference>
<dbReference type="Pfam" id="PF02569">
    <property type="entry name" value="Pantoate_ligase"/>
    <property type="match status" value="1"/>
</dbReference>
<dbReference type="SUPFAM" id="SSF52374">
    <property type="entry name" value="Nucleotidylyl transferase"/>
    <property type="match status" value="1"/>
</dbReference>
<sequence>MRVLETIVALREYRKSLEESVGFVPTMGALHKGHQSLIERSLKENSHTIVSVFVNPTQFGANEDFNAYPRPLEKDLALCEKLGVNAVFVPKIGEMYPYEAEQRLKLYAPKFLSSSLEGAMRKGHFDGVVQIVLKMFHLVNPTRAYFGKKDAQQLLIIEHLVKDLLLDIEIAPCEIVRDDDNLALSSRNVYLNATQRKQALAIPKALEKIQQAIDKGEKACEKLKKLGLEILETLEVDYLECCNHKLEPLTIIEPTNTLILVAARVGKTRLLDNLWV</sequence>
<gene>
    <name evidence="1" type="primary">panC</name>
    <name type="ordered locus">HP_0006</name>
</gene>
<proteinExistence type="inferred from homology"/>
<accession>P56061</accession>